<accession>A7X5D4</accession>
<feature type="chain" id="PRO_1000054549" description="Large ribosomal subunit protein uL15">
    <location>
        <begin position="1"/>
        <end position="146"/>
    </location>
</feature>
<feature type="region of interest" description="Disordered" evidence="2">
    <location>
        <begin position="1"/>
        <end position="54"/>
    </location>
</feature>
<feature type="compositionally biased region" description="Basic and acidic residues" evidence="2">
    <location>
        <begin position="1"/>
        <end position="18"/>
    </location>
</feature>
<feature type="compositionally biased region" description="Gly residues" evidence="2">
    <location>
        <begin position="42"/>
        <end position="52"/>
    </location>
</feature>
<sequence length="146" mass="15597">MKLHELKPAEGSRKERNRVGRGVATGNGKTSGRGHKGQKARSGGGVRPGFEGGQLPLFRRLPKRGFTNINRKEYAIVNLDQLNKFEDGTEVTPALLVESGVVKNEKSGIKILGNGSLDKKLTVKAHKFSASAAEAIDAKGGAHEVI</sequence>
<protein>
    <recommendedName>
        <fullName evidence="1">Large ribosomal subunit protein uL15</fullName>
    </recommendedName>
    <alternativeName>
        <fullName evidence="3">50S ribosomal protein L15</fullName>
    </alternativeName>
</protein>
<keyword id="KW-0687">Ribonucleoprotein</keyword>
<keyword id="KW-0689">Ribosomal protein</keyword>
<keyword id="KW-0694">RNA-binding</keyword>
<keyword id="KW-0699">rRNA-binding</keyword>
<comment type="function">
    <text evidence="1">Binds to the 23S rRNA.</text>
</comment>
<comment type="subunit">
    <text evidence="1">Part of the 50S ribosomal subunit.</text>
</comment>
<comment type="similarity">
    <text evidence="1">Belongs to the universal ribosomal protein uL15 family.</text>
</comment>
<organism>
    <name type="scientific">Staphylococcus aureus (strain Mu3 / ATCC 700698)</name>
    <dbReference type="NCBI Taxonomy" id="418127"/>
    <lineage>
        <taxon>Bacteria</taxon>
        <taxon>Bacillati</taxon>
        <taxon>Bacillota</taxon>
        <taxon>Bacilli</taxon>
        <taxon>Bacillales</taxon>
        <taxon>Staphylococcaceae</taxon>
        <taxon>Staphylococcus</taxon>
    </lineage>
</organism>
<name>RL15_STAA1</name>
<dbReference type="EMBL" id="AP009324">
    <property type="protein sequence ID" value="BAF79098.1"/>
    <property type="molecule type" value="Genomic_DNA"/>
</dbReference>
<dbReference type="RefSeq" id="WP_000766074.1">
    <property type="nucleotide sequence ID" value="NZ_CTYB01000025.1"/>
</dbReference>
<dbReference type="SMR" id="A7X5D4"/>
<dbReference type="GeneID" id="98346543"/>
<dbReference type="KEGG" id="saw:SAHV_2215"/>
<dbReference type="HOGENOM" id="CLU_055188_4_2_9"/>
<dbReference type="GO" id="GO:0022625">
    <property type="term" value="C:cytosolic large ribosomal subunit"/>
    <property type="evidence" value="ECO:0007669"/>
    <property type="project" value="TreeGrafter"/>
</dbReference>
<dbReference type="GO" id="GO:0019843">
    <property type="term" value="F:rRNA binding"/>
    <property type="evidence" value="ECO:0007669"/>
    <property type="project" value="UniProtKB-UniRule"/>
</dbReference>
<dbReference type="GO" id="GO:0003735">
    <property type="term" value="F:structural constituent of ribosome"/>
    <property type="evidence" value="ECO:0007669"/>
    <property type="project" value="InterPro"/>
</dbReference>
<dbReference type="GO" id="GO:0006412">
    <property type="term" value="P:translation"/>
    <property type="evidence" value="ECO:0007669"/>
    <property type="project" value="UniProtKB-UniRule"/>
</dbReference>
<dbReference type="FunFam" id="3.100.10.10:FF:000004">
    <property type="entry name" value="50S ribosomal protein L15"/>
    <property type="match status" value="1"/>
</dbReference>
<dbReference type="Gene3D" id="3.100.10.10">
    <property type="match status" value="1"/>
</dbReference>
<dbReference type="HAMAP" id="MF_01341">
    <property type="entry name" value="Ribosomal_uL15"/>
    <property type="match status" value="1"/>
</dbReference>
<dbReference type="InterPro" id="IPR030878">
    <property type="entry name" value="Ribosomal_uL15"/>
</dbReference>
<dbReference type="InterPro" id="IPR021131">
    <property type="entry name" value="Ribosomal_uL15/eL18"/>
</dbReference>
<dbReference type="InterPro" id="IPR036227">
    <property type="entry name" value="Ribosomal_uL15/eL18_sf"/>
</dbReference>
<dbReference type="InterPro" id="IPR005749">
    <property type="entry name" value="Ribosomal_uL15_bac-type"/>
</dbReference>
<dbReference type="InterPro" id="IPR001196">
    <property type="entry name" value="Ribosomal_uL15_CS"/>
</dbReference>
<dbReference type="NCBIfam" id="TIGR01071">
    <property type="entry name" value="rplO_bact"/>
    <property type="match status" value="1"/>
</dbReference>
<dbReference type="PANTHER" id="PTHR12934">
    <property type="entry name" value="50S RIBOSOMAL PROTEIN L15"/>
    <property type="match status" value="1"/>
</dbReference>
<dbReference type="PANTHER" id="PTHR12934:SF11">
    <property type="entry name" value="LARGE RIBOSOMAL SUBUNIT PROTEIN UL15M"/>
    <property type="match status" value="1"/>
</dbReference>
<dbReference type="Pfam" id="PF00828">
    <property type="entry name" value="Ribosomal_L27A"/>
    <property type="match status" value="1"/>
</dbReference>
<dbReference type="SUPFAM" id="SSF52080">
    <property type="entry name" value="Ribosomal proteins L15p and L18e"/>
    <property type="match status" value="1"/>
</dbReference>
<dbReference type="PROSITE" id="PS00475">
    <property type="entry name" value="RIBOSOMAL_L15"/>
    <property type="match status" value="1"/>
</dbReference>
<evidence type="ECO:0000255" key="1">
    <source>
        <dbReference type="HAMAP-Rule" id="MF_01341"/>
    </source>
</evidence>
<evidence type="ECO:0000256" key="2">
    <source>
        <dbReference type="SAM" id="MobiDB-lite"/>
    </source>
</evidence>
<evidence type="ECO:0000305" key="3"/>
<proteinExistence type="inferred from homology"/>
<reference key="1">
    <citation type="journal article" date="2008" name="Antimicrob. Agents Chemother.">
        <title>Mutated response regulator graR is responsible for phenotypic conversion of Staphylococcus aureus from heterogeneous vancomycin-intermediate resistance to vancomycin-intermediate resistance.</title>
        <authorList>
            <person name="Neoh H.-M."/>
            <person name="Cui L."/>
            <person name="Yuzawa H."/>
            <person name="Takeuchi F."/>
            <person name="Matsuo M."/>
            <person name="Hiramatsu K."/>
        </authorList>
    </citation>
    <scope>NUCLEOTIDE SEQUENCE [LARGE SCALE GENOMIC DNA]</scope>
    <source>
        <strain>Mu3 / ATCC 700698</strain>
    </source>
</reference>
<gene>
    <name evidence="1" type="primary">rplO</name>
    <name type="ordered locus">SAHV_2215</name>
</gene>